<protein>
    <recommendedName>
        <fullName evidence="1">tRNA (guanine-N(1)-)-methyltransferase</fullName>
        <ecNumber evidence="1">2.1.1.228</ecNumber>
    </recommendedName>
    <alternativeName>
        <fullName evidence="1">M1G-methyltransferase</fullName>
    </alternativeName>
    <alternativeName>
        <fullName evidence="1">tRNA [GM37] methyltransferase</fullName>
    </alternativeName>
</protein>
<name>TRMD_BORRA</name>
<evidence type="ECO:0000255" key="1">
    <source>
        <dbReference type="HAMAP-Rule" id="MF_00605"/>
    </source>
</evidence>
<proteinExistence type="inferred from homology"/>
<dbReference type="EC" id="2.1.1.228" evidence="1"/>
<dbReference type="EMBL" id="CP000993">
    <property type="protein sequence ID" value="ACH94923.1"/>
    <property type="molecule type" value="Genomic_DNA"/>
</dbReference>
<dbReference type="RefSeq" id="WP_012538438.1">
    <property type="nucleotide sequence ID" value="NZ_CP169983.1"/>
</dbReference>
<dbReference type="SMR" id="B5RQ39"/>
<dbReference type="KEGG" id="bre:BRE_704"/>
<dbReference type="HOGENOM" id="CLU_047363_0_1_12"/>
<dbReference type="Proteomes" id="UP000000612">
    <property type="component" value="Chromosome"/>
</dbReference>
<dbReference type="GO" id="GO:0005829">
    <property type="term" value="C:cytosol"/>
    <property type="evidence" value="ECO:0007669"/>
    <property type="project" value="TreeGrafter"/>
</dbReference>
<dbReference type="GO" id="GO:0052906">
    <property type="term" value="F:tRNA (guanine(37)-N1)-methyltransferase activity"/>
    <property type="evidence" value="ECO:0007669"/>
    <property type="project" value="UniProtKB-UniRule"/>
</dbReference>
<dbReference type="GO" id="GO:0002939">
    <property type="term" value="P:tRNA N1-guanine methylation"/>
    <property type="evidence" value="ECO:0007669"/>
    <property type="project" value="TreeGrafter"/>
</dbReference>
<dbReference type="CDD" id="cd18080">
    <property type="entry name" value="TrmD-like"/>
    <property type="match status" value="1"/>
</dbReference>
<dbReference type="FunFam" id="3.40.1280.10:FF:000001">
    <property type="entry name" value="tRNA (guanine-N(1)-)-methyltransferase"/>
    <property type="match status" value="1"/>
</dbReference>
<dbReference type="Gene3D" id="3.40.1280.10">
    <property type="match status" value="1"/>
</dbReference>
<dbReference type="Gene3D" id="1.10.1270.20">
    <property type="entry name" value="tRNA(m1g37)methyltransferase, domain 2"/>
    <property type="match status" value="1"/>
</dbReference>
<dbReference type="HAMAP" id="MF_00605">
    <property type="entry name" value="TrmD"/>
    <property type="match status" value="1"/>
</dbReference>
<dbReference type="InterPro" id="IPR029028">
    <property type="entry name" value="Alpha/beta_knot_MTases"/>
</dbReference>
<dbReference type="InterPro" id="IPR023148">
    <property type="entry name" value="tRNA_m1G_MeTrfase_C_sf"/>
</dbReference>
<dbReference type="InterPro" id="IPR002649">
    <property type="entry name" value="tRNA_m1G_MeTrfase_TrmD"/>
</dbReference>
<dbReference type="InterPro" id="IPR029026">
    <property type="entry name" value="tRNA_m1G_MTases_N"/>
</dbReference>
<dbReference type="InterPro" id="IPR016009">
    <property type="entry name" value="tRNA_MeTrfase_TRMD/TRM10"/>
</dbReference>
<dbReference type="NCBIfam" id="NF000648">
    <property type="entry name" value="PRK00026.1"/>
    <property type="match status" value="1"/>
</dbReference>
<dbReference type="NCBIfam" id="TIGR00088">
    <property type="entry name" value="trmD"/>
    <property type="match status" value="1"/>
</dbReference>
<dbReference type="PANTHER" id="PTHR46417">
    <property type="entry name" value="TRNA (GUANINE-N(1)-)-METHYLTRANSFERASE"/>
    <property type="match status" value="1"/>
</dbReference>
<dbReference type="PANTHER" id="PTHR46417:SF1">
    <property type="entry name" value="TRNA (GUANINE-N(1)-)-METHYLTRANSFERASE"/>
    <property type="match status" value="1"/>
</dbReference>
<dbReference type="Pfam" id="PF01746">
    <property type="entry name" value="tRNA_m1G_MT"/>
    <property type="match status" value="1"/>
</dbReference>
<dbReference type="PIRSF" id="PIRSF000386">
    <property type="entry name" value="tRNA_mtase"/>
    <property type="match status" value="1"/>
</dbReference>
<dbReference type="SUPFAM" id="SSF75217">
    <property type="entry name" value="alpha/beta knot"/>
    <property type="match status" value="1"/>
</dbReference>
<comment type="function">
    <text evidence="1">Specifically methylates guanosine-37 in various tRNAs.</text>
</comment>
<comment type="catalytic activity">
    <reaction evidence="1">
        <text>guanosine(37) in tRNA + S-adenosyl-L-methionine = N(1)-methylguanosine(37) in tRNA + S-adenosyl-L-homocysteine + H(+)</text>
        <dbReference type="Rhea" id="RHEA:36899"/>
        <dbReference type="Rhea" id="RHEA-COMP:10145"/>
        <dbReference type="Rhea" id="RHEA-COMP:10147"/>
        <dbReference type="ChEBI" id="CHEBI:15378"/>
        <dbReference type="ChEBI" id="CHEBI:57856"/>
        <dbReference type="ChEBI" id="CHEBI:59789"/>
        <dbReference type="ChEBI" id="CHEBI:73542"/>
        <dbReference type="ChEBI" id="CHEBI:74269"/>
        <dbReference type="EC" id="2.1.1.228"/>
    </reaction>
</comment>
<comment type="subunit">
    <text evidence="1">Homodimer.</text>
</comment>
<comment type="subcellular location">
    <subcellularLocation>
        <location evidence="1">Cytoplasm</location>
    </subcellularLocation>
</comment>
<comment type="similarity">
    <text evidence="1">Belongs to the RNA methyltransferase TrmD family.</text>
</comment>
<gene>
    <name evidence="1" type="primary">trmD</name>
    <name type="ordered locus">BRE_704</name>
</gene>
<accession>B5RQ39</accession>
<feature type="chain" id="PRO_1000130139" description="tRNA (guanine-N(1)-)-methyltransferase">
    <location>
        <begin position="1"/>
        <end position="240"/>
    </location>
</feature>
<feature type="binding site" evidence="1">
    <location>
        <position position="110"/>
    </location>
    <ligand>
        <name>S-adenosyl-L-methionine</name>
        <dbReference type="ChEBI" id="CHEBI:59789"/>
    </ligand>
</feature>
<feature type="binding site" evidence="1">
    <location>
        <begin position="130"/>
        <end position="135"/>
    </location>
    <ligand>
        <name>S-adenosyl-L-methionine</name>
        <dbReference type="ChEBI" id="CHEBI:59789"/>
    </ligand>
</feature>
<sequence length="240" mass="27441">MKITILSLFPSIITPFFENSIMKKVVDKGIISYEVISIRDFSKDKHKRCDDVPYGGGAGMVLKVQPIVDALEYVNANSKTTIFVSPSGLKYTQKLAYDLSKKDELVIICGRYEGLDQRVIDLYVDLEISVGDYVLSSGEVAALVIIDSVYRLLDGVINPNSLCEESFSFECGLLEYPHYTRPYEFRNLKVPDVLLSGHHEEIKKWRLVKSVEKTKKNRFDLYLKYLEMRGEKNDGFDKKN</sequence>
<reference key="1">
    <citation type="journal article" date="2008" name="PLoS Genet.">
        <title>The genome of Borrelia recurrentis, the agent of deadly louse-borne relapsing fever, is a degraded subset of tick-borne Borrelia duttonii.</title>
        <authorList>
            <person name="Lescot M."/>
            <person name="Audic S."/>
            <person name="Robert C."/>
            <person name="Nguyen T.T."/>
            <person name="Blanc G."/>
            <person name="Cutler S.J."/>
            <person name="Wincker P."/>
            <person name="Couloux A."/>
            <person name="Claverie J.-M."/>
            <person name="Raoult D."/>
            <person name="Drancourt M."/>
        </authorList>
    </citation>
    <scope>NUCLEOTIDE SEQUENCE [LARGE SCALE GENOMIC DNA]</scope>
    <source>
        <strain>A1</strain>
    </source>
</reference>
<keyword id="KW-0963">Cytoplasm</keyword>
<keyword id="KW-0489">Methyltransferase</keyword>
<keyword id="KW-0949">S-adenosyl-L-methionine</keyword>
<keyword id="KW-0808">Transferase</keyword>
<keyword id="KW-0819">tRNA processing</keyword>
<organism>
    <name type="scientific">Borrelia recurrentis (strain A1)</name>
    <dbReference type="NCBI Taxonomy" id="412418"/>
    <lineage>
        <taxon>Bacteria</taxon>
        <taxon>Pseudomonadati</taxon>
        <taxon>Spirochaetota</taxon>
        <taxon>Spirochaetia</taxon>
        <taxon>Spirochaetales</taxon>
        <taxon>Borreliaceae</taxon>
        <taxon>Borrelia</taxon>
    </lineage>
</organism>